<comment type="function">
    <text evidence="3">Purine salvage pathway enzyme that catalyzes the transfer of the ribosyl-5-phosphate group from 5-phospho-alpha-D-ribose 1-diphosphate (PRPP) to the N9 position of the 6-oxopurines hypoxanthine and guanine to form the corresponding ribonucleotides IMP (inosine 5'-monophosphate) and GMP (guanosine 5'-monophosphate), with the release of PPi.</text>
</comment>
<comment type="catalytic activity">
    <reaction evidence="3">
        <text>IMP + diphosphate = hypoxanthine + 5-phospho-alpha-D-ribose 1-diphosphate</text>
        <dbReference type="Rhea" id="RHEA:17973"/>
        <dbReference type="ChEBI" id="CHEBI:17368"/>
        <dbReference type="ChEBI" id="CHEBI:33019"/>
        <dbReference type="ChEBI" id="CHEBI:58017"/>
        <dbReference type="ChEBI" id="CHEBI:58053"/>
        <dbReference type="EC" id="2.4.2.8"/>
    </reaction>
    <physiologicalReaction direction="right-to-left" evidence="3">
        <dbReference type="Rhea" id="RHEA:17975"/>
    </physiologicalReaction>
</comment>
<comment type="catalytic activity">
    <reaction evidence="3">
        <text>GMP + diphosphate = guanine + 5-phospho-alpha-D-ribose 1-diphosphate</text>
        <dbReference type="Rhea" id="RHEA:25424"/>
        <dbReference type="ChEBI" id="CHEBI:16235"/>
        <dbReference type="ChEBI" id="CHEBI:33019"/>
        <dbReference type="ChEBI" id="CHEBI:58017"/>
        <dbReference type="ChEBI" id="CHEBI:58115"/>
        <dbReference type="EC" id="2.4.2.8"/>
    </reaction>
    <physiologicalReaction direction="right-to-left" evidence="3">
        <dbReference type="Rhea" id="RHEA:25426"/>
    </physiologicalReaction>
</comment>
<comment type="cofactor">
    <cofactor evidence="3">
        <name>Mg(2+)</name>
        <dbReference type="ChEBI" id="CHEBI:18420"/>
    </cofactor>
</comment>
<comment type="pathway">
    <text evidence="3">Purine metabolism; IMP biosynthesis via salvage pathway; IMP from hypoxanthine: step 1/1.</text>
</comment>
<comment type="pathway">
    <text evidence="3">Purine metabolism; GMP biosynthesis via salvage pathway; GMP from guanine: step 1/1.</text>
</comment>
<comment type="subcellular location">
    <subcellularLocation>
        <location evidence="1">Cytoplasm</location>
    </subcellularLocation>
</comment>
<comment type="similarity">
    <text evidence="4">Belongs to the purine/pyrimidine phosphoribosyltransferase family.</text>
</comment>
<evidence type="ECO:0000250" key="1"/>
<evidence type="ECO:0000250" key="2">
    <source>
        <dbReference type="UniProtKB" id="P0A9M2"/>
    </source>
</evidence>
<evidence type="ECO:0000250" key="3">
    <source>
        <dbReference type="UniProtKB" id="P9WHQ9"/>
    </source>
</evidence>
<evidence type="ECO:0000305" key="4"/>
<feature type="chain" id="PRO_0000139628" description="Hypoxanthine-guanine phosphoribosyltransferase">
    <location>
        <begin position="1"/>
        <end position="180"/>
    </location>
</feature>
<feature type="active site" description="Proton acceptor" evidence="2">
    <location>
        <position position="103"/>
    </location>
</feature>
<feature type="binding site" evidence="3">
    <location>
        <position position="43"/>
    </location>
    <ligand>
        <name>diphosphate</name>
        <dbReference type="ChEBI" id="CHEBI:33019"/>
    </ligand>
</feature>
<feature type="binding site" evidence="3">
    <location>
        <position position="44"/>
    </location>
    <ligand>
        <name>diphosphate</name>
        <dbReference type="ChEBI" id="CHEBI:33019"/>
    </ligand>
</feature>
<feature type="binding site" evidence="3">
    <location>
        <position position="99"/>
    </location>
    <ligand>
        <name>Mg(2+)</name>
        <dbReference type="ChEBI" id="CHEBI:18420"/>
    </ligand>
</feature>
<feature type="binding site" evidence="3">
    <location>
        <position position="100"/>
    </location>
    <ligand>
        <name>Mg(2+)</name>
        <dbReference type="ChEBI" id="CHEBI:18420"/>
    </ligand>
</feature>
<feature type="binding site" evidence="3">
    <location>
        <position position="131"/>
    </location>
    <ligand>
        <name>GMP</name>
        <dbReference type="ChEBI" id="CHEBI:58115"/>
    </ligand>
</feature>
<feature type="binding site" evidence="3">
    <location>
        <begin position="152"/>
        <end position="153"/>
    </location>
    <ligand>
        <name>GMP</name>
        <dbReference type="ChEBI" id="CHEBI:58115"/>
    </ligand>
</feature>
<feature type="binding site" evidence="3">
    <location>
        <position position="159"/>
    </location>
    <ligand>
        <name>GMP</name>
        <dbReference type="ChEBI" id="CHEBI:58115"/>
    </ligand>
</feature>
<feature type="binding site" evidence="3">
    <location>
        <position position="165"/>
    </location>
    <ligand>
        <name>diphosphate</name>
        <dbReference type="ChEBI" id="CHEBI:33019"/>
    </ligand>
</feature>
<accession>Q5M6K8</accession>
<keyword id="KW-0963">Cytoplasm</keyword>
<keyword id="KW-0328">Glycosyltransferase</keyword>
<keyword id="KW-0460">Magnesium</keyword>
<keyword id="KW-0479">Metal-binding</keyword>
<keyword id="KW-0547">Nucleotide-binding</keyword>
<keyword id="KW-0660">Purine salvage</keyword>
<keyword id="KW-1185">Reference proteome</keyword>
<keyword id="KW-0808">Transferase</keyword>
<name>HGPRT_STRT2</name>
<sequence length="180" mass="20506">MLEKDIKKILFSQEDIVTKTKELGQQLTKDYAGKNPLLVCVLKGAVPFMAELIKHIDTHIEMDFMVVSSYGGGTVSSGEVKILKDVDTNIEGRDVIFIEDIIDTGRTLLYLRDMFKYRKASSVKIATLFDKPEGRVVDIEADYVCYDVPNEFIVGFGLDYDEKYRNLPYVGVLKEEIYNK</sequence>
<protein>
    <recommendedName>
        <fullName>Hypoxanthine-guanine phosphoribosyltransferase</fullName>
        <shortName>HGPRT</shortName>
        <shortName>HGPRTase</shortName>
        <ecNumber evidence="3">2.4.2.8</ecNumber>
    </recommendedName>
</protein>
<reference key="1">
    <citation type="journal article" date="2004" name="Nat. Biotechnol.">
        <title>Complete sequence and comparative genome analysis of the dairy bacterium Streptococcus thermophilus.</title>
        <authorList>
            <person name="Bolotin A."/>
            <person name="Quinquis B."/>
            <person name="Renault P."/>
            <person name="Sorokin A."/>
            <person name="Ehrlich S.D."/>
            <person name="Kulakauskas S."/>
            <person name="Lapidus A."/>
            <person name="Goltsman E."/>
            <person name="Mazur M."/>
            <person name="Pusch G.D."/>
            <person name="Fonstein M."/>
            <person name="Overbeek R."/>
            <person name="Kyprides N."/>
            <person name="Purnelle B."/>
            <person name="Prozzi D."/>
            <person name="Ngui K."/>
            <person name="Masuy D."/>
            <person name="Hancy F."/>
            <person name="Burteau S."/>
            <person name="Boutry M."/>
            <person name="Delcour J."/>
            <person name="Goffeau A."/>
            <person name="Hols P."/>
        </authorList>
    </citation>
    <scope>NUCLEOTIDE SEQUENCE [LARGE SCALE GENOMIC DNA]</scope>
    <source>
        <strain>ATCC BAA-250 / LMG 18311</strain>
    </source>
</reference>
<proteinExistence type="inferred from homology"/>
<organism>
    <name type="scientific">Streptococcus thermophilus (strain ATCC BAA-250 / LMG 18311)</name>
    <dbReference type="NCBI Taxonomy" id="264199"/>
    <lineage>
        <taxon>Bacteria</taxon>
        <taxon>Bacillati</taxon>
        <taxon>Bacillota</taxon>
        <taxon>Bacilli</taxon>
        <taxon>Lactobacillales</taxon>
        <taxon>Streptococcaceae</taxon>
        <taxon>Streptococcus</taxon>
    </lineage>
</organism>
<dbReference type="EC" id="2.4.2.8" evidence="3"/>
<dbReference type="EMBL" id="CP000023">
    <property type="protein sequence ID" value="AAV59741.1"/>
    <property type="molecule type" value="Genomic_DNA"/>
</dbReference>
<dbReference type="RefSeq" id="WP_002948598.1">
    <property type="nucleotide sequence ID" value="NC_006448.1"/>
</dbReference>
<dbReference type="SMR" id="Q5M6K8"/>
<dbReference type="STRING" id="264199.stu0011"/>
<dbReference type="GeneID" id="66897915"/>
<dbReference type="KEGG" id="stl:stu0011"/>
<dbReference type="eggNOG" id="COG0634">
    <property type="taxonomic scope" value="Bacteria"/>
</dbReference>
<dbReference type="HOGENOM" id="CLU_073615_0_0_9"/>
<dbReference type="UniPathway" id="UPA00591">
    <property type="reaction ID" value="UER00648"/>
</dbReference>
<dbReference type="UniPathway" id="UPA00909">
    <property type="reaction ID" value="UER00887"/>
</dbReference>
<dbReference type="Proteomes" id="UP000001170">
    <property type="component" value="Chromosome"/>
</dbReference>
<dbReference type="GO" id="GO:0005829">
    <property type="term" value="C:cytosol"/>
    <property type="evidence" value="ECO:0007669"/>
    <property type="project" value="TreeGrafter"/>
</dbReference>
<dbReference type="GO" id="GO:0052657">
    <property type="term" value="F:guanine phosphoribosyltransferase activity"/>
    <property type="evidence" value="ECO:0007669"/>
    <property type="project" value="RHEA"/>
</dbReference>
<dbReference type="GO" id="GO:0004422">
    <property type="term" value="F:hypoxanthine phosphoribosyltransferase activity"/>
    <property type="evidence" value="ECO:0007669"/>
    <property type="project" value="InterPro"/>
</dbReference>
<dbReference type="GO" id="GO:0000287">
    <property type="term" value="F:magnesium ion binding"/>
    <property type="evidence" value="ECO:0007669"/>
    <property type="project" value="TreeGrafter"/>
</dbReference>
<dbReference type="GO" id="GO:0000166">
    <property type="term" value="F:nucleotide binding"/>
    <property type="evidence" value="ECO:0007669"/>
    <property type="project" value="UniProtKB-KW"/>
</dbReference>
<dbReference type="GO" id="GO:0032263">
    <property type="term" value="P:GMP salvage"/>
    <property type="evidence" value="ECO:0007669"/>
    <property type="project" value="UniProtKB-UniPathway"/>
</dbReference>
<dbReference type="GO" id="GO:0006178">
    <property type="term" value="P:guanine salvage"/>
    <property type="evidence" value="ECO:0007669"/>
    <property type="project" value="TreeGrafter"/>
</dbReference>
<dbReference type="GO" id="GO:0046100">
    <property type="term" value="P:hypoxanthine metabolic process"/>
    <property type="evidence" value="ECO:0007669"/>
    <property type="project" value="TreeGrafter"/>
</dbReference>
<dbReference type="GO" id="GO:0032264">
    <property type="term" value="P:IMP salvage"/>
    <property type="evidence" value="ECO:0007669"/>
    <property type="project" value="UniProtKB-UniPathway"/>
</dbReference>
<dbReference type="GO" id="GO:0006166">
    <property type="term" value="P:purine ribonucleoside salvage"/>
    <property type="evidence" value="ECO:0007669"/>
    <property type="project" value="UniProtKB-KW"/>
</dbReference>
<dbReference type="CDD" id="cd06223">
    <property type="entry name" value="PRTases_typeI"/>
    <property type="match status" value="1"/>
</dbReference>
<dbReference type="FunFam" id="3.40.50.2020:FF:000006">
    <property type="entry name" value="Hypoxanthine phosphoribosyltransferase"/>
    <property type="match status" value="1"/>
</dbReference>
<dbReference type="Gene3D" id="3.40.50.2020">
    <property type="match status" value="1"/>
</dbReference>
<dbReference type="InterPro" id="IPR050408">
    <property type="entry name" value="HGPRT"/>
</dbReference>
<dbReference type="InterPro" id="IPR005904">
    <property type="entry name" value="Hxn_phspho_trans"/>
</dbReference>
<dbReference type="InterPro" id="IPR000836">
    <property type="entry name" value="PRibTrfase_dom"/>
</dbReference>
<dbReference type="InterPro" id="IPR029057">
    <property type="entry name" value="PRTase-like"/>
</dbReference>
<dbReference type="NCBIfam" id="TIGR01203">
    <property type="entry name" value="HGPRTase"/>
    <property type="match status" value="1"/>
</dbReference>
<dbReference type="PANTHER" id="PTHR43340:SF1">
    <property type="entry name" value="HYPOXANTHINE PHOSPHORIBOSYLTRANSFERASE"/>
    <property type="match status" value="1"/>
</dbReference>
<dbReference type="PANTHER" id="PTHR43340">
    <property type="entry name" value="HYPOXANTHINE-GUANINE PHOSPHORIBOSYLTRANSFERASE"/>
    <property type="match status" value="1"/>
</dbReference>
<dbReference type="Pfam" id="PF00156">
    <property type="entry name" value="Pribosyltran"/>
    <property type="match status" value="1"/>
</dbReference>
<dbReference type="SUPFAM" id="SSF53271">
    <property type="entry name" value="PRTase-like"/>
    <property type="match status" value="1"/>
</dbReference>
<gene>
    <name type="primary">hpt</name>
    <name type="ordered locus">stu0011</name>
</gene>